<organism>
    <name type="scientific">Thermus thermophilus (strain ATCC BAA-163 / DSM 7039 / HB27)</name>
    <dbReference type="NCBI Taxonomy" id="262724"/>
    <lineage>
        <taxon>Bacteria</taxon>
        <taxon>Thermotogati</taxon>
        <taxon>Deinococcota</taxon>
        <taxon>Deinococci</taxon>
        <taxon>Thermales</taxon>
        <taxon>Thermaceae</taxon>
        <taxon>Thermus</taxon>
    </lineage>
</organism>
<comment type="function">
    <text evidence="4 8">Catalyzes the release of L-lysine from [LysW]-gamma-L-lysine (Probable). In vitro, can deacetylate both N(2)-acetyl-L-lysine and N(2)-acetyl-L-ornithine (PubMed:11852094).</text>
</comment>
<comment type="catalytic activity">
    <reaction evidence="3 8">
        <text>[amino-group carrier protein]-C-terminal-gamma-(L-lysyl)-L-glutamate + H2O = [amino-group carrier protein]-C-terminal-L-glutamate + L-lysine</text>
        <dbReference type="Rhea" id="RHEA:48684"/>
        <dbReference type="Rhea" id="RHEA-COMP:9693"/>
        <dbReference type="Rhea" id="RHEA-COMP:9715"/>
        <dbReference type="ChEBI" id="CHEBI:15377"/>
        <dbReference type="ChEBI" id="CHEBI:32551"/>
        <dbReference type="ChEBI" id="CHEBI:78525"/>
        <dbReference type="ChEBI" id="CHEBI:78526"/>
        <dbReference type="EC" id="3.5.1.130"/>
    </reaction>
</comment>
<comment type="cofactor">
    <cofactor evidence="1 3">
        <name>Zn(2+)</name>
        <dbReference type="ChEBI" id="CHEBI:29105"/>
    </cofactor>
    <cofactor evidence="1 3">
        <name>Co(2+)</name>
        <dbReference type="ChEBI" id="CHEBI:48828"/>
    </cofactor>
    <text evidence="1 3">Binds 2 Zn(2+) or Co(2+) ions per subunit.</text>
</comment>
<comment type="biophysicochemical properties">
    <kinetics>
        <KM evidence="4">1.3 mM for N(2)-acetyl-L-lysine</KM>
        <KM evidence="4">0.5 mM for N(2)-acetyl-L-ornithine</KM>
        <text evidence="4">kcat is 51.8 sec(-1) with N(2)-acetyl-L-lysine. kcat is 28.1 sec(-1) with N(2)-acetyl-L-ornithine.</text>
    </kinetics>
</comment>
<comment type="pathway">
    <text evidence="3 4 5">Amino-acid biosynthesis; L-lysine biosynthesis via AAA pathway; L-lysine from L-alpha-aminoadipate (Thermus route): step 5/5.</text>
</comment>
<comment type="subunit">
    <text evidence="4">Homotetramer and homooctamer.</text>
</comment>
<comment type="subcellular location">
    <subcellularLocation>
        <location evidence="3 7">Cytoplasm</location>
    </subcellularLocation>
</comment>
<comment type="disruption phenotype">
    <text evidence="4">Knockout mutant shows significantly slow growth in minimal medium, which could be partially restored by the addition of lysine. Exogenous addition of ornithine has a negligible effect on the growth of the mutant, but growth is much improved by the simultaneous addition of lysine and ornithine.</text>
</comment>
<comment type="similarity">
    <text evidence="3 7">Belongs to the peptidase M20A family. LysK subfamily.</text>
</comment>
<gene>
    <name evidence="3 6" type="primary">lysK</name>
    <name type="ordered locus">TT_C1396</name>
</gene>
<name>LYSK_THET2</name>
<sequence length="361" mass="39608">MSKSALDPVEFLKGALEIPSPSGKERLVAEYLAEGMQKLGLKGFVDEADNARGQVGEGPVQVVLLGHIDTVPGQIPVRLEGGRLFGRGAVDAKGPFVAMIFAAAGLSEEARKRLTVHLVGATEEEAPSSKGARFVAPRLKPHYAVIGEPSGWEGITLGYKGRLLVKARREKDHFHSAHHEPNAAEELISYFVAIKAWAEAMNVGQRPFDQVQYTLRDFRVHPAELRQVAEMFFDLRLPPRLPPEEAIRHLTAYAPPTIELEFFGREVPYQGPKDTPLTRAFRQAIRKAGGRPVFKLKTGTSDMNVLAPHWPVPMVAYGPGDSTLDHTPYEHVEVAEFLKGIEVLRGALEALAQTHAGEKEG</sequence>
<reference key="1">
    <citation type="journal article" date="2002" name="FEBS Lett.">
        <title>Characterization of a lysK gene as an argE homolog in Thermus thermophilus HB27.</title>
        <authorList>
            <person name="Miyazaki J."/>
            <person name="Kobashi N."/>
            <person name="Fujii T."/>
            <person name="Nishiyama M."/>
            <person name="Yamane H."/>
        </authorList>
    </citation>
    <scope>NUCLEOTIDE SEQUENCE [GENOMIC DNA]</scope>
    <scope>FUNCTION</scope>
    <scope>BIOPHYSICOCHEMICAL PROPERTIES</scope>
    <scope>PATHWAY</scope>
    <scope>SUBUNIT</scope>
    <scope>DISRUPTION PHENOTYPE</scope>
    <scope>GENE NAME</scope>
    <source>
        <strain>ATCC BAA-163 / DSM 7039 / HB27</strain>
    </source>
</reference>
<reference key="2">
    <citation type="journal article" date="2004" name="Nat. Biotechnol.">
        <title>The genome sequence of the extreme thermophile Thermus thermophilus.</title>
        <authorList>
            <person name="Henne A."/>
            <person name="Brueggemann H."/>
            <person name="Raasch C."/>
            <person name="Wiezer A."/>
            <person name="Hartsch T."/>
            <person name="Liesegang H."/>
            <person name="Johann A."/>
            <person name="Lienard T."/>
            <person name="Gohl O."/>
            <person name="Martinez-Arias R."/>
            <person name="Jacobi C."/>
            <person name="Starkuviene V."/>
            <person name="Schlenczeck S."/>
            <person name="Dencker S."/>
            <person name="Huber R."/>
            <person name="Klenk H.-P."/>
            <person name="Kramer W."/>
            <person name="Merkl R."/>
            <person name="Gottschalk G."/>
            <person name="Fritz H.-J."/>
        </authorList>
    </citation>
    <scope>NUCLEOTIDE SEQUENCE [LARGE SCALE GENOMIC DNA]</scope>
    <source>
        <strain>ATCC BAA-163 / DSM 7039 / HB27</strain>
    </source>
</reference>
<reference key="3">
    <citation type="journal article" date="2009" name="Nat. Chem. Biol.">
        <title>Discovery of proteinaceous N-modification in lysine biosynthesis of Thermus thermophilus.</title>
        <authorList>
            <person name="Horie A."/>
            <person name="Tomita T."/>
            <person name="Saiki A."/>
            <person name="Kono H."/>
            <person name="Taka H."/>
            <person name="Mineki R."/>
            <person name="Fujimura T."/>
            <person name="Nishiyama C."/>
            <person name="Kuzuyama T."/>
            <person name="Nishiyama M."/>
        </authorList>
    </citation>
    <scope>FUNCTION</scope>
    <scope>CATALYTIC ACTIVITY</scope>
    <scope>PATHWAY</scope>
    <source>
        <strain>ATCC BAA-163 / DSM 7039 / HB27</strain>
    </source>
</reference>
<reference evidence="9" key="4">
    <citation type="submission" date="2015-01" db="PDB data bank">
        <title>Crystal structure of LysK from Thermus thermophilus.</title>
        <authorList>
            <person name="Fujita S."/>
            <person name="Hasebe F."/>
            <person name="Cho S.H."/>
            <person name="Tomita T."/>
            <person name="Kuzuyama T."/>
            <person name="Nishiyama M."/>
        </authorList>
    </citation>
    <scope>X-RAY CRYSTALLOGRAPHY (2.39 ANGSTROMS) OF 2-361</scope>
    <source>
        <strain>ATCC BAA-163 / DSM 7039 / HB27</strain>
    </source>
</reference>
<dbReference type="EC" id="3.5.1.130" evidence="3 8"/>
<dbReference type="EMBL" id="AB063579">
    <property type="protein sequence ID" value="BAB79614.1"/>
    <property type="molecule type" value="Genomic_DNA"/>
</dbReference>
<dbReference type="EMBL" id="AE017221">
    <property type="protein sequence ID" value="AAS81738.1"/>
    <property type="molecule type" value="Genomic_DNA"/>
</dbReference>
<dbReference type="RefSeq" id="WP_011173778.1">
    <property type="nucleotide sequence ID" value="NC_005835.1"/>
</dbReference>
<dbReference type="PDB" id="5XOY">
    <property type="method" value="X-ray"/>
    <property type="resolution" value="2.39 A"/>
    <property type="chains" value="A/B=2-361"/>
</dbReference>
<dbReference type="PDBsum" id="5XOY"/>
<dbReference type="SMR" id="Q8VUS5"/>
<dbReference type="MEROPS" id="M20.022"/>
<dbReference type="KEGG" id="tth:TT_C1396"/>
<dbReference type="eggNOG" id="COG0624">
    <property type="taxonomic scope" value="Bacteria"/>
</dbReference>
<dbReference type="HOGENOM" id="CLU_021802_2_0_0"/>
<dbReference type="OrthoDB" id="9792335at2"/>
<dbReference type="BioCyc" id="MetaCyc:MONOMER-6742"/>
<dbReference type="BRENDA" id="3.5.1.130">
    <property type="organism ID" value="2305"/>
</dbReference>
<dbReference type="SABIO-RK" id="Q8VUS5"/>
<dbReference type="UniPathway" id="UPA00033">
    <property type="reaction ID" value="UER00039"/>
</dbReference>
<dbReference type="Proteomes" id="UP000000592">
    <property type="component" value="Chromosome"/>
</dbReference>
<dbReference type="GO" id="GO:0005737">
    <property type="term" value="C:cytoplasm"/>
    <property type="evidence" value="ECO:0007669"/>
    <property type="project" value="UniProtKB-SubCell"/>
</dbReference>
<dbReference type="GO" id="GO:0050897">
    <property type="term" value="F:cobalt ion binding"/>
    <property type="evidence" value="ECO:0007669"/>
    <property type="project" value="UniProtKB-UniRule"/>
</dbReference>
<dbReference type="GO" id="GO:0016811">
    <property type="term" value="F:hydrolase activity, acting on carbon-nitrogen (but not peptide) bonds, in linear amides"/>
    <property type="evidence" value="ECO:0007669"/>
    <property type="project" value="UniProtKB-UniRule"/>
</dbReference>
<dbReference type="GO" id="GO:0008270">
    <property type="term" value="F:zinc ion binding"/>
    <property type="evidence" value="ECO:0007669"/>
    <property type="project" value="UniProtKB-UniRule"/>
</dbReference>
<dbReference type="GO" id="GO:0019878">
    <property type="term" value="P:lysine biosynthetic process via aminoadipic acid"/>
    <property type="evidence" value="ECO:0007669"/>
    <property type="project" value="UniProtKB-UniRule"/>
</dbReference>
<dbReference type="CDD" id="cd05653">
    <property type="entry name" value="M20_ArgE_LysK"/>
    <property type="match status" value="1"/>
</dbReference>
<dbReference type="Gene3D" id="3.40.630.10">
    <property type="entry name" value="Zn peptidases"/>
    <property type="match status" value="2"/>
</dbReference>
<dbReference type="HAMAP" id="MF_01120">
    <property type="entry name" value="LysK"/>
    <property type="match status" value="1"/>
</dbReference>
<dbReference type="InterPro" id="IPR010175">
    <property type="entry name" value="LysK"/>
</dbReference>
<dbReference type="InterPro" id="IPR002933">
    <property type="entry name" value="Peptidase_M20"/>
</dbReference>
<dbReference type="InterPro" id="IPR050072">
    <property type="entry name" value="Peptidase_M20A"/>
</dbReference>
<dbReference type="NCBIfam" id="TIGR01902">
    <property type="entry name" value="dapE-lys-deAc"/>
    <property type="match status" value="1"/>
</dbReference>
<dbReference type="NCBIfam" id="NF003367">
    <property type="entry name" value="PRK04443.1"/>
    <property type="match status" value="1"/>
</dbReference>
<dbReference type="PANTHER" id="PTHR43808:SF28">
    <property type="entry name" value="[LYSW]-LYSINE_[LYSW]-ORNITHINE HYDROLASE"/>
    <property type="match status" value="1"/>
</dbReference>
<dbReference type="PANTHER" id="PTHR43808">
    <property type="entry name" value="ACETYLORNITHINE DEACETYLASE"/>
    <property type="match status" value="1"/>
</dbReference>
<dbReference type="Pfam" id="PF01546">
    <property type="entry name" value="Peptidase_M20"/>
    <property type="match status" value="1"/>
</dbReference>
<dbReference type="SUPFAM" id="SSF53187">
    <property type="entry name" value="Zn-dependent exopeptidases"/>
    <property type="match status" value="1"/>
</dbReference>
<proteinExistence type="evidence at protein level"/>
<evidence type="ECO:0000250" key="1">
    <source>
        <dbReference type="UniProtKB" id="P23908"/>
    </source>
</evidence>
<evidence type="ECO:0000250" key="2">
    <source>
        <dbReference type="UniProtKB" id="P44514"/>
    </source>
</evidence>
<evidence type="ECO:0000255" key="3">
    <source>
        <dbReference type="HAMAP-Rule" id="MF_01120"/>
    </source>
</evidence>
<evidence type="ECO:0000269" key="4">
    <source>
    </source>
</evidence>
<evidence type="ECO:0000269" key="5">
    <source>
    </source>
</evidence>
<evidence type="ECO:0000303" key="6">
    <source>
    </source>
</evidence>
<evidence type="ECO:0000305" key="7"/>
<evidence type="ECO:0000305" key="8">
    <source>
    </source>
</evidence>
<evidence type="ECO:0007744" key="9">
    <source>
        <dbReference type="PDB" id="5XOY"/>
    </source>
</evidence>
<evidence type="ECO:0007829" key="10">
    <source>
        <dbReference type="PDB" id="5XOY"/>
    </source>
</evidence>
<keyword id="KW-0002">3D-structure</keyword>
<keyword id="KW-0028">Amino-acid biosynthesis</keyword>
<keyword id="KW-0170">Cobalt</keyword>
<keyword id="KW-0963">Cytoplasm</keyword>
<keyword id="KW-0378">Hydrolase</keyword>
<keyword id="KW-0457">Lysine biosynthesis</keyword>
<keyword id="KW-0479">Metal-binding</keyword>
<keyword id="KW-0862">Zinc</keyword>
<protein>
    <recommendedName>
        <fullName evidence="3 7">[LysW]-lysine hydrolase</fullName>
        <ecNumber evidence="3 8">3.5.1.130</ecNumber>
    </recommendedName>
</protein>
<accession>Q8VUS5</accession>
<feature type="chain" id="PRO_0000185343" description="[LysW]-lysine hydrolase">
    <location>
        <begin position="1"/>
        <end position="361"/>
    </location>
</feature>
<feature type="active site" evidence="2 3">
    <location>
        <position position="69"/>
    </location>
</feature>
<feature type="active site" description="Proton acceptor" evidence="2 3">
    <location>
        <position position="124"/>
    </location>
</feature>
<feature type="binding site" evidence="2 3">
    <location>
        <position position="67"/>
    </location>
    <ligand>
        <name>Zn(2+)</name>
        <dbReference type="ChEBI" id="CHEBI:29105"/>
        <label>1</label>
    </ligand>
</feature>
<feature type="binding site" evidence="2 3">
    <location>
        <position position="91"/>
    </location>
    <ligand>
        <name>Zn(2+)</name>
        <dbReference type="ChEBI" id="CHEBI:29105"/>
        <label>1</label>
    </ligand>
</feature>
<feature type="binding site" evidence="2 3">
    <location>
        <position position="91"/>
    </location>
    <ligand>
        <name>Zn(2+)</name>
        <dbReference type="ChEBI" id="CHEBI:29105"/>
        <label>2</label>
    </ligand>
</feature>
<feature type="binding site" evidence="2 3">
    <location>
        <position position="125"/>
    </location>
    <ligand>
        <name>Zn(2+)</name>
        <dbReference type="ChEBI" id="CHEBI:29105"/>
        <label>2</label>
    </ligand>
</feature>
<feature type="binding site" evidence="2 3">
    <location>
        <position position="148"/>
    </location>
    <ligand>
        <name>Zn(2+)</name>
        <dbReference type="ChEBI" id="CHEBI:29105"/>
        <label>1</label>
    </ligand>
</feature>
<feature type="binding site" evidence="2 3">
    <location>
        <position position="326"/>
    </location>
    <ligand>
        <name>Zn(2+)</name>
        <dbReference type="ChEBI" id="CHEBI:29105"/>
        <label>2</label>
    </ligand>
</feature>
<feature type="helix" evidence="10">
    <location>
        <begin position="8"/>
        <end position="16"/>
    </location>
</feature>
<feature type="helix" evidence="10">
    <location>
        <begin position="26"/>
        <end position="38"/>
    </location>
</feature>
<feature type="strand" evidence="10">
    <location>
        <begin position="51"/>
        <end position="56"/>
    </location>
</feature>
<feature type="strand" evidence="10">
    <location>
        <begin position="59"/>
        <end position="67"/>
    </location>
</feature>
<feature type="strand" evidence="10">
    <location>
        <begin position="78"/>
        <end position="80"/>
    </location>
</feature>
<feature type="strand" evidence="10">
    <location>
        <begin position="83"/>
        <end position="86"/>
    </location>
</feature>
<feature type="turn" evidence="10">
    <location>
        <begin position="87"/>
        <end position="92"/>
    </location>
</feature>
<feature type="helix" evidence="10">
    <location>
        <begin position="93"/>
        <end position="104"/>
    </location>
</feature>
<feature type="helix" evidence="10">
    <location>
        <begin position="108"/>
        <end position="113"/>
    </location>
</feature>
<feature type="strand" evidence="10">
    <location>
        <begin position="114"/>
        <end position="123"/>
    </location>
</feature>
<feature type="helix" evidence="10">
    <location>
        <begin position="130"/>
        <end position="135"/>
    </location>
</feature>
<feature type="helix" evidence="10">
    <location>
        <begin position="136"/>
        <end position="138"/>
    </location>
</feature>
<feature type="strand" evidence="10">
    <location>
        <begin position="142"/>
        <end position="148"/>
    </location>
</feature>
<feature type="strand" evidence="10">
    <location>
        <begin position="154"/>
        <end position="159"/>
    </location>
</feature>
<feature type="strand" evidence="10">
    <location>
        <begin position="161"/>
        <end position="170"/>
    </location>
</feature>
<feature type="helix" evidence="10">
    <location>
        <begin position="183"/>
        <end position="202"/>
    </location>
</feature>
<feature type="helix" evidence="10">
    <location>
        <begin position="207"/>
        <end position="209"/>
    </location>
</feature>
<feature type="strand" evidence="10">
    <location>
        <begin position="212"/>
        <end position="221"/>
    </location>
</feature>
<feature type="strand" evidence="10">
    <location>
        <begin position="228"/>
        <end position="237"/>
    </location>
</feature>
<feature type="helix" evidence="10">
    <location>
        <begin position="243"/>
        <end position="252"/>
    </location>
</feature>
<feature type="strand" evidence="10">
    <location>
        <begin position="258"/>
        <end position="266"/>
    </location>
</feature>
<feature type="helix" evidence="10">
    <location>
        <begin position="276"/>
        <end position="287"/>
    </location>
</feature>
<feature type="strand" evidence="10">
    <location>
        <begin position="293"/>
        <end position="299"/>
    </location>
</feature>
<feature type="helix" evidence="10">
    <location>
        <begin position="302"/>
        <end position="306"/>
    </location>
</feature>
<feature type="turn" evidence="10">
    <location>
        <begin position="307"/>
        <end position="309"/>
    </location>
</feature>
<feature type="strand" evidence="10">
    <location>
        <begin position="314"/>
        <end position="317"/>
    </location>
</feature>
<feature type="helix" evidence="10">
    <location>
        <begin position="322"/>
        <end position="324"/>
    </location>
</feature>
<feature type="strand" evidence="10">
    <location>
        <begin position="331"/>
        <end position="333"/>
    </location>
</feature>
<feature type="helix" evidence="10">
    <location>
        <begin position="334"/>
        <end position="353"/>
    </location>
</feature>